<gene>
    <name evidence="1" type="primary">iscS</name>
    <name type="ordered locus">SARI_00333</name>
</gene>
<protein>
    <recommendedName>
        <fullName evidence="1">Cysteine desulfurase IscS</fullName>
        <ecNumber evidence="1">2.8.1.7</ecNumber>
    </recommendedName>
</protein>
<organism>
    <name type="scientific">Salmonella arizonae (strain ATCC BAA-731 / CDC346-86 / RSK2980)</name>
    <dbReference type="NCBI Taxonomy" id="41514"/>
    <lineage>
        <taxon>Bacteria</taxon>
        <taxon>Pseudomonadati</taxon>
        <taxon>Pseudomonadota</taxon>
        <taxon>Gammaproteobacteria</taxon>
        <taxon>Enterobacterales</taxon>
        <taxon>Enterobacteriaceae</taxon>
        <taxon>Salmonella</taxon>
    </lineage>
</organism>
<sequence length="404" mass="44979">MKLPIYLDYSATTPVDPRVAEKMMQFLTLDGTFGNPASRSHRFGWQAEEAVDIARNQIAELVGADPREIVFTSGATESDNLAIKGAANFYQKKGKHIITSKTEHKAVLDTCRQLEREGFEVTYLAPQSNGIIDLKALEAAMRDDTILVSIMHVNNEIGVVQDIATIGEMCRARGIIYHVDATQSVGKLPIDLSQLKVDLMSFSGHKIYGPKGIGALYVRRKPRIRIEAQMHGGGHERGMRSGTLPVHQIVGMGEAYRIAKEEMETEMARLRGLRNRLWNGIKDIEEVYLNGDLEQGAPNILNVSFNYVEGESLIMALKDLAVSSGSACTSASLEPSYVLRALGMNDELAHSSIRFSLGRFTTEEEIDYTIDLVRKSIGRLRDLSPLWEMYKQGVDLNSIEWAHH</sequence>
<comment type="function">
    <text evidence="1">Master enzyme that delivers sulfur to a number of partners involved in Fe-S cluster assembly, tRNA modification or cofactor biosynthesis. Catalyzes the removal of elemental sulfur and selenium atoms from cysteine and selenocysteine to produce alanine. Functions as a sulfur delivery protein for Fe-S cluster synthesis onto IscU, an Fe-S scaffold assembly protein, as well as other S acceptor proteins. Also functions as a selenium delivery protein in the pathway for the biosynthesis of selenophosphate.</text>
</comment>
<comment type="catalytic activity">
    <reaction evidence="1">
        <text>(sulfur carrier)-H + L-cysteine = (sulfur carrier)-SH + L-alanine</text>
        <dbReference type="Rhea" id="RHEA:43892"/>
        <dbReference type="Rhea" id="RHEA-COMP:14737"/>
        <dbReference type="Rhea" id="RHEA-COMP:14739"/>
        <dbReference type="ChEBI" id="CHEBI:29917"/>
        <dbReference type="ChEBI" id="CHEBI:35235"/>
        <dbReference type="ChEBI" id="CHEBI:57972"/>
        <dbReference type="ChEBI" id="CHEBI:64428"/>
        <dbReference type="EC" id="2.8.1.7"/>
    </reaction>
</comment>
<comment type="cofactor">
    <cofactor evidence="1">
        <name>pyridoxal 5'-phosphate</name>
        <dbReference type="ChEBI" id="CHEBI:597326"/>
    </cofactor>
</comment>
<comment type="pathway">
    <text evidence="1">Cofactor biosynthesis; iron-sulfur cluster biosynthesis.</text>
</comment>
<comment type="subunit">
    <text evidence="1">Homodimer. Forms a heterotetramer with IscU, interacts with other sulfur acceptors.</text>
</comment>
<comment type="subcellular location">
    <subcellularLocation>
        <location evidence="1">Cytoplasm</location>
    </subcellularLocation>
</comment>
<comment type="similarity">
    <text evidence="1">Belongs to the class-V pyridoxal-phosphate-dependent aminotransferase family. NifS/IscS subfamily.</text>
</comment>
<reference key="1">
    <citation type="submission" date="2007-11" db="EMBL/GenBank/DDBJ databases">
        <authorList>
            <consortium name="The Salmonella enterica serovar Arizonae Genome Sequencing Project"/>
            <person name="McClelland M."/>
            <person name="Sanderson E.K."/>
            <person name="Porwollik S."/>
            <person name="Spieth J."/>
            <person name="Clifton W.S."/>
            <person name="Fulton R."/>
            <person name="Chunyan W."/>
            <person name="Wollam A."/>
            <person name="Shah N."/>
            <person name="Pepin K."/>
            <person name="Bhonagiri V."/>
            <person name="Nash W."/>
            <person name="Johnson M."/>
            <person name="Thiruvilangam P."/>
            <person name="Wilson R."/>
        </authorList>
    </citation>
    <scope>NUCLEOTIDE SEQUENCE [LARGE SCALE GENOMIC DNA]</scope>
    <source>
        <strain>ATCC BAA-731 / CDC346-86 / RSK2980</strain>
    </source>
</reference>
<accession>A9MHJ4</accession>
<dbReference type="EC" id="2.8.1.7" evidence="1"/>
<dbReference type="EMBL" id="CP000880">
    <property type="protein sequence ID" value="ABX20272.1"/>
    <property type="molecule type" value="Genomic_DNA"/>
</dbReference>
<dbReference type="BMRB" id="A9MHJ4"/>
<dbReference type="SMR" id="A9MHJ4"/>
<dbReference type="STRING" id="41514.SARI_00333"/>
<dbReference type="KEGG" id="ses:SARI_00333"/>
<dbReference type="HOGENOM" id="CLU_003433_0_2_6"/>
<dbReference type="UniPathway" id="UPA00266"/>
<dbReference type="Proteomes" id="UP000002084">
    <property type="component" value="Chromosome"/>
</dbReference>
<dbReference type="GO" id="GO:1990221">
    <property type="term" value="C:L-cysteine desulfurase complex"/>
    <property type="evidence" value="ECO:0007669"/>
    <property type="project" value="UniProtKB-ARBA"/>
</dbReference>
<dbReference type="GO" id="GO:0051537">
    <property type="term" value="F:2 iron, 2 sulfur cluster binding"/>
    <property type="evidence" value="ECO:0007669"/>
    <property type="project" value="UniProtKB-UniRule"/>
</dbReference>
<dbReference type="GO" id="GO:0031071">
    <property type="term" value="F:cysteine desulfurase activity"/>
    <property type="evidence" value="ECO:0007669"/>
    <property type="project" value="UniProtKB-UniRule"/>
</dbReference>
<dbReference type="GO" id="GO:0046872">
    <property type="term" value="F:metal ion binding"/>
    <property type="evidence" value="ECO:0007669"/>
    <property type="project" value="UniProtKB-KW"/>
</dbReference>
<dbReference type="GO" id="GO:0030170">
    <property type="term" value="F:pyridoxal phosphate binding"/>
    <property type="evidence" value="ECO:0007669"/>
    <property type="project" value="UniProtKB-UniRule"/>
</dbReference>
<dbReference type="GO" id="GO:0044571">
    <property type="term" value="P:[2Fe-2S] cluster assembly"/>
    <property type="evidence" value="ECO:0007669"/>
    <property type="project" value="UniProtKB-UniRule"/>
</dbReference>
<dbReference type="FunFam" id="3.40.640.10:FF:000003">
    <property type="entry name" value="Cysteine desulfurase IscS"/>
    <property type="match status" value="1"/>
</dbReference>
<dbReference type="FunFam" id="3.90.1150.10:FF:000002">
    <property type="entry name" value="Cysteine desulfurase IscS"/>
    <property type="match status" value="1"/>
</dbReference>
<dbReference type="Gene3D" id="3.90.1150.10">
    <property type="entry name" value="Aspartate Aminotransferase, domain 1"/>
    <property type="match status" value="1"/>
</dbReference>
<dbReference type="Gene3D" id="3.40.640.10">
    <property type="entry name" value="Type I PLP-dependent aspartate aminotransferase-like (Major domain)"/>
    <property type="match status" value="1"/>
</dbReference>
<dbReference type="HAMAP" id="MF_00331">
    <property type="entry name" value="Cys_desulf_IscS"/>
    <property type="match status" value="1"/>
</dbReference>
<dbReference type="InterPro" id="IPR000192">
    <property type="entry name" value="Aminotrans_V_dom"/>
</dbReference>
<dbReference type="InterPro" id="IPR020578">
    <property type="entry name" value="Aminotrans_V_PyrdxlP_BS"/>
</dbReference>
<dbReference type="InterPro" id="IPR010240">
    <property type="entry name" value="Cys_deSase_IscS"/>
</dbReference>
<dbReference type="InterPro" id="IPR016454">
    <property type="entry name" value="Cysteine_dSase"/>
</dbReference>
<dbReference type="InterPro" id="IPR015424">
    <property type="entry name" value="PyrdxlP-dep_Trfase"/>
</dbReference>
<dbReference type="InterPro" id="IPR015421">
    <property type="entry name" value="PyrdxlP-dep_Trfase_major"/>
</dbReference>
<dbReference type="InterPro" id="IPR015422">
    <property type="entry name" value="PyrdxlP-dep_Trfase_small"/>
</dbReference>
<dbReference type="NCBIfam" id="TIGR02006">
    <property type="entry name" value="IscS"/>
    <property type="match status" value="1"/>
</dbReference>
<dbReference type="NCBIfam" id="NF002806">
    <property type="entry name" value="PRK02948.1"/>
    <property type="match status" value="1"/>
</dbReference>
<dbReference type="NCBIfam" id="NF010611">
    <property type="entry name" value="PRK14012.1"/>
    <property type="match status" value="1"/>
</dbReference>
<dbReference type="PANTHER" id="PTHR11601:SF34">
    <property type="entry name" value="CYSTEINE DESULFURASE"/>
    <property type="match status" value="1"/>
</dbReference>
<dbReference type="PANTHER" id="PTHR11601">
    <property type="entry name" value="CYSTEINE DESULFURYLASE FAMILY MEMBER"/>
    <property type="match status" value="1"/>
</dbReference>
<dbReference type="Pfam" id="PF00266">
    <property type="entry name" value="Aminotran_5"/>
    <property type="match status" value="1"/>
</dbReference>
<dbReference type="PIRSF" id="PIRSF005572">
    <property type="entry name" value="NifS"/>
    <property type="match status" value="1"/>
</dbReference>
<dbReference type="SUPFAM" id="SSF53383">
    <property type="entry name" value="PLP-dependent transferases"/>
    <property type="match status" value="1"/>
</dbReference>
<dbReference type="PROSITE" id="PS00595">
    <property type="entry name" value="AA_TRANSFER_CLASS_5"/>
    <property type="match status" value="1"/>
</dbReference>
<proteinExistence type="inferred from homology"/>
<evidence type="ECO:0000255" key="1">
    <source>
        <dbReference type="HAMAP-Rule" id="MF_00331"/>
    </source>
</evidence>
<feature type="chain" id="PRO_1000079209" description="Cysteine desulfurase IscS">
    <location>
        <begin position="1"/>
        <end position="404"/>
    </location>
</feature>
<feature type="active site" description="Cysteine persulfide intermediate" evidence="1">
    <location>
        <position position="328"/>
    </location>
</feature>
<feature type="binding site" evidence="1">
    <location>
        <begin position="75"/>
        <end position="76"/>
    </location>
    <ligand>
        <name>pyridoxal 5'-phosphate</name>
        <dbReference type="ChEBI" id="CHEBI:597326"/>
    </ligand>
</feature>
<feature type="binding site" evidence="1">
    <location>
        <position position="155"/>
    </location>
    <ligand>
        <name>pyridoxal 5'-phosphate</name>
        <dbReference type="ChEBI" id="CHEBI:597326"/>
    </ligand>
</feature>
<feature type="binding site" evidence="1">
    <location>
        <position position="183"/>
    </location>
    <ligand>
        <name>pyridoxal 5'-phosphate</name>
        <dbReference type="ChEBI" id="CHEBI:597326"/>
    </ligand>
</feature>
<feature type="binding site" evidence="1">
    <location>
        <begin position="203"/>
        <end position="205"/>
    </location>
    <ligand>
        <name>pyridoxal 5'-phosphate</name>
        <dbReference type="ChEBI" id="CHEBI:597326"/>
    </ligand>
</feature>
<feature type="binding site" evidence="1">
    <location>
        <position position="243"/>
    </location>
    <ligand>
        <name>pyridoxal 5'-phosphate</name>
        <dbReference type="ChEBI" id="CHEBI:597326"/>
    </ligand>
</feature>
<feature type="binding site" description="via persulfide group" evidence="1">
    <location>
        <position position="328"/>
    </location>
    <ligand>
        <name>[2Fe-2S] cluster</name>
        <dbReference type="ChEBI" id="CHEBI:190135"/>
        <note>ligand shared with IscU</note>
    </ligand>
</feature>
<feature type="modified residue" description="N6-(pyridoxal phosphate)lysine" evidence="1">
    <location>
        <position position="206"/>
    </location>
</feature>
<name>ISCS_SALAR</name>
<keyword id="KW-0001">2Fe-2S</keyword>
<keyword id="KW-0963">Cytoplasm</keyword>
<keyword id="KW-0408">Iron</keyword>
<keyword id="KW-0411">Iron-sulfur</keyword>
<keyword id="KW-0479">Metal-binding</keyword>
<keyword id="KW-0663">Pyridoxal phosphate</keyword>
<keyword id="KW-1185">Reference proteome</keyword>
<keyword id="KW-0808">Transferase</keyword>